<feature type="chain" id="PRO_0000423591" description="Sensor histidine kinase TodS">
    <location>
        <begin position="1"/>
        <end position="978"/>
    </location>
</feature>
<feature type="domain" description="PAS 1" evidence="3">
    <location>
        <begin position="32"/>
        <end position="103"/>
    </location>
</feature>
<feature type="domain" description="PAC 1" evidence="4">
    <location>
        <begin position="108"/>
        <end position="162"/>
    </location>
</feature>
<feature type="domain" description="Histidine kinase 1" evidence="2">
    <location>
        <begin position="187"/>
        <end position="405"/>
    </location>
</feature>
<feature type="domain" description="Response regulatory" evidence="5">
    <location>
        <begin position="452"/>
        <end position="567"/>
    </location>
</feature>
<feature type="domain" description="PAS 2" evidence="3">
    <location>
        <begin position="611"/>
        <end position="681"/>
    </location>
</feature>
<feature type="domain" description="PAC 2" evidence="4">
    <location>
        <begin position="685"/>
        <end position="737"/>
    </location>
</feature>
<feature type="domain" description="Histidine kinase 2" evidence="2">
    <location>
        <begin position="757"/>
        <end position="974"/>
    </location>
</feature>
<feature type="modified residue" description="Phosphohistidine; by autocatalysis" evidence="2">
    <location>
        <position position="190"/>
    </location>
</feature>
<feature type="modified residue" description="4-aspartylphosphate" evidence="5">
    <location>
        <position position="500"/>
    </location>
</feature>
<feature type="modified residue" description="Phosphohistidine" evidence="1">
    <location>
        <position position="760"/>
    </location>
</feature>
<feature type="sequence conflict" description="In Ref. 1; AAC45438." evidence="7" ref="1">
    <original>PLEAVMA</original>
    <variation>HWKPLWR</variation>
    <location>
        <begin position="202"/>
        <end position="208"/>
    </location>
</feature>
<feature type="strand" evidence="9">
    <location>
        <begin position="45"/>
        <end position="51"/>
    </location>
</feature>
<feature type="strand" evidence="9">
    <location>
        <begin position="54"/>
        <end position="59"/>
    </location>
</feature>
<feature type="helix" evidence="9">
    <location>
        <begin position="61"/>
        <end position="67"/>
    </location>
</feature>
<feature type="helix" evidence="9">
    <location>
        <begin position="71"/>
        <end position="74"/>
    </location>
</feature>
<feature type="helix" evidence="9">
    <location>
        <begin position="79"/>
        <end position="81"/>
    </location>
</feature>
<feature type="helix" evidence="9">
    <location>
        <begin position="83"/>
        <end position="85"/>
    </location>
</feature>
<feature type="helix" evidence="9">
    <location>
        <begin position="89"/>
        <end position="103"/>
    </location>
</feature>
<feature type="strand" evidence="9">
    <location>
        <begin position="108"/>
        <end position="117"/>
    </location>
</feature>
<feature type="helix" evidence="9">
    <location>
        <begin position="118"/>
        <end position="120"/>
    </location>
</feature>
<feature type="strand" evidence="9">
    <location>
        <begin position="122"/>
        <end position="134"/>
    </location>
</feature>
<feature type="strand" evidence="9">
    <location>
        <begin position="140"/>
        <end position="149"/>
    </location>
</feature>
<feature type="helix" evidence="9">
    <location>
        <begin position="151"/>
        <end position="164"/>
    </location>
</feature>
<proteinExistence type="evidence at protein level"/>
<evidence type="ECO:0000250" key="1"/>
<evidence type="ECO:0000255" key="2">
    <source>
        <dbReference type="PROSITE-ProRule" id="PRU00107"/>
    </source>
</evidence>
<evidence type="ECO:0000255" key="3">
    <source>
        <dbReference type="PROSITE-ProRule" id="PRU00140"/>
    </source>
</evidence>
<evidence type="ECO:0000255" key="4">
    <source>
        <dbReference type="PROSITE-ProRule" id="PRU00141"/>
    </source>
</evidence>
<evidence type="ECO:0000255" key="5">
    <source>
        <dbReference type="PROSITE-ProRule" id="PRU00169"/>
    </source>
</evidence>
<evidence type="ECO:0000269" key="6">
    <source>
    </source>
</evidence>
<evidence type="ECO:0000305" key="7"/>
<evidence type="ECO:0000305" key="8">
    <source>
    </source>
</evidence>
<evidence type="ECO:0007829" key="9">
    <source>
        <dbReference type="PDB" id="5HWV"/>
    </source>
</evidence>
<gene>
    <name type="primary">todS</name>
    <name type="ordered locus">Pput_2872</name>
</gene>
<reference key="1">
    <citation type="journal article" date="1997" name="Proc. Natl. Acad. Sci. U.S.A.">
        <title>A bacterial basic region leucine zipper histidine kinase regulating toluene degradation.</title>
        <authorList>
            <person name="Lau P.C."/>
            <person name="Wang Y."/>
            <person name="Patel A."/>
            <person name="Labbe D."/>
            <person name="Bergeron H."/>
            <person name="Brousseau R."/>
            <person name="Konishi Y."/>
            <person name="Rawlings M."/>
        </authorList>
    </citation>
    <scope>NUCLEOTIDE SEQUENCE [GENOMIC DNA]</scope>
    <scope>FUNCTION</scope>
    <scope>SUBUNIT</scope>
    <scope>SUBCELLULAR LOCATION</scope>
    <scope>DOMAIN</scope>
    <scope>DISRUPTION PHENOTYPE</scope>
    <scope>GENE NAME</scope>
    <source>
        <strain>ATCC 700007 / DSM 6899 / JCM 31910 / BCRC 17059 / LMG 24140 / F1</strain>
    </source>
</reference>
<reference key="2">
    <citation type="submission" date="2007-05" db="EMBL/GenBank/DDBJ databases">
        <title>Complete sequence of Pseudomonas putida F1.</title>
        <authorList>
            <consortium name="US DOE Joint Genome Institute"/>
            <person name="Copeland A."/>
            <person name="Lucas S."/>
            <person name="Lapidus A."/>
            <person name="Barry K."/>
            <person name="Detter J.C."/>
            <person name="Glavina del Rio T."/>
            <person name="Hammon N."/>
            <person name="Israni S."/>
            <person name="Dalin E."/>
            <person name="Tice H."/>
            <person name="Pitluck S."/>
            <person name="Chain P."/>
            <person name="Malfatti S."/>
            <person name="Shin M."/>
            <person name="Vergez L."/>
            <person name="Schmutz J."/>
            <person name="Larimer F."/>
            <person name="Land M."/>
            <person name="Hauser L."/>
            <person name="Kyrpides N."/>
            <person name="Lykidis A."/>
            <person name="Parales R."/>
            <person name="Richardson P."/>
        </authorList>
    </citation>
    <scope>NUCLEOTIDE SEQUENCE [LARGE SCALE GENOMIC DNA]</scope>
    <source>
        <strain>ATCC 700007 / DSM 6899 / JCM 31910 / BCRC 17059 / LMG 24140 / F1</strain>
    </source>
</reference>
<dbReference type="EC" id="2.7.13.3"/>
<dbReference type="EMBL" id="U72354">
    <property type="protein sequence ID" value="AAC45438.1"/>
    <property type="molecule type" value="Genomic_DNA"/>
</dbReference>
<dbReference type="EMBL" id="CP000712">
    <property type="protein sequence ID" value="ABQ79003.1"/>
    <property type="molecule type" value="Genomic_DNA"/>
</dbReference>
<dbReference type="PDB" id="5HWT">
    <property type="method" value="X-ray"/>
    <property type="resolution" value="1.70 A"/>
    <property type="chains" value="A/B=43-168"/>
</dbReference>
<dbReference type="PDB" id="5HWV">
    <property type="method" value="X-ray"/>
    <property type="resolution" value="1.65 A"/>
    <property type="chains" value="A/B=43-168"/>
</dbReference>
<dbReference type="PDB" id="5HWW">
    <property type="method" value="X-ray"/>
    <property type="resolution" value="2.00 A"/>
    <property type="chains" value="A/B=43-168"/>
</dbReference>
<dbReference type="PDBsum" id="5HWT"/>
<dbReference type="PDBsum" id="5HWV"/>
<dbReference type="PDBsum" id="5HWW"/>
<dbReference type="SMR" id="A5W4E3"/>
<dbReference type="KEGG" id="ppf:Pput_2872"/>
<dbReference type="eggNOG" id="COG0745">
    <property type="taxonomic scope" value="Bacteria"/>
</dbReference>
<dbReference type="eggNOG" id="COG2205">
    <property type="taxonomic scope" value="Bacteria"/>
</dbReference>
<dbReference type="eggNOG" id="COG4191">
    <property type="taxonomic scope" value="Bacteria"/>
</dbReference>
<dbReference type="HOGENOM" id="CLU_000445_82_2_6"/>
<dbReference type="EvolutionaryTrace" id="A5W4E3"/>
<dbReference type="GO" id="GO:0005737">
    <property type="term" value="C:cytoplasm"/>
    <property type="evidence" value="ECO:0007669"/>
    <property type="project" value="UniProtKB-SubCell"/>
</dbReference>
<dbReference type="GO" id="GO:0005524">
    <property type="term" value="F:ATP binding"/>
    <property type="evidence" value="ECO:0007669"/>
    <property type="project" value="UniProtKB-KW"/>
</dbReference>
<dbReference type="GO" id="GO:0000155">
    <property type="term" value="F:phosphorelay sensor kinase activity"/>
    <property type="evidence" value="ECO:0007669"/>
    <property type="project" value="InterPro"/>
</dbReference>
<dbReference type="CDD" id="cd16925">
    <property type="entry name" value="HATPase_TutC-TodS-like"/>
    <property type="match status" value="1"/>
</dbReference>
<dbReference type="CDD" id="cd00082">
    <property type="entry name" value="HisKA"/>
    <property type="match status" value="2"/>
</dbReference>
<dbReference type="CDD" id="cd00130">
    <property type="entry name" value="PAS"/>
    <property type="match status" value="2"/>
</dbReference>
<dbReference type="CDD" id="cd00156">
    <property type="entry name" value="REC"/>
    <property type="match status" value="1"/>
</dbReference>
<dbReference type="FunFam" id="3.30.565.10:FF:000037">
    <property type="entry name" value="Hybrid sensor histidine kinase/response regulator"/>
    <property type="match status" value="1"/>
</dbReference>
<dbReference type="FunFam" id="3.40.50.2300:FF:000121">
    <property type="entry name" value="Sensor histidine kinase RcsC"/>
    <property type="match status" value="1"/>
</dbReference>
<dbReference type="FunFam" id="3.30.450.20:FF:000155">
    <property type="entry name" value="Sensor histidine kinase TodS"/>
    <property type="match status" value="1"/>
</dbReference>
<dbReference type="FunFam" id="1.10.287.130:FF:000055">
    <property type="entry name" value="Two-component sensor histidine kinase"/>
    <property type="match status" value="1"/>
</dbReference>
<dbReference type="FunFam" id="3.30.565.10:FF:000042">
    <property type="entry name" value="Two-component sensor histidine kinase KdpD"/>
    <property type="match status" value="1"/>
</dbReference>
<dbReference type="FunFam" id="1.10.287.130:FF:000045">
    <property type="entry name" value="Two-component system sensor histidine kinase/response regulator"/>
    <property type="match status" value="1"/>
</dbReference>
<dbReference type="Gene3D" id="1.10.287.130">
    <property type="match status" value="2"/>
</dbReference>
<dbReference type="Gene3D" id="3.40.50.2300">
    <property type="match status" value="1"/>
</dbReference>
<dbReference type="Gene3D" id="3.30.565.10">
    <property type="entry name" value="Histidine kinase-like ATPase, C-terminal domain"/>
    <property type="match status" value="2"/>
</dbReference>
<dbReference type="Gene3D" id="3.30.450.20">
    <property type="entry name" value="PAS domain"/>
    <property type="match status" value="2"/>
</dbReference>
<dbReference type="InterPro" id="IPR011006">
    <property type="entry name" value="CheY-like_superfamily"/>
</dbReference>
<dbReference type="InterPro" id="IPR036890">
    <property type="entry name" value="HATPase_C_sf"/>
</dbReference>
<dbReference type="InterPro" id="IPR005467">
    <property type="entry name" value="His_kinase_dom"/>
</dbReference>
<dbReference type="InterPro" id="IPR003661">
    <property type="entry name" value="HisK_dim/P_dom"/>
</dbReference>
<dbReference type="InterPro" id="IPR036097">
    <property type="entry name" value="HisK_dim/P_sf"/>
</dbReference>
<dbReference type="InterPro" id="IPR001610">
    <property type="entry name" value="PAC"/>
</dbReference>
<dbReference type="InterPro" id="IPR000014">
    <property type="entry name" value="PAS"/>
</dbReference>
<dbReference type="InterPro" id="IPR000700">
    <property type="entry name" value="PAS-assoc_C"/>
</dbReference>
<dbReference type="InterPro" id="IPR035965">
    <property type="entry name" value="PAS-like_dom_sf"/>
</dbReference>
<dbReference type="InterPro" id="IPR013656">
    <property type="entry name" value="PAS_4"/>
</dbReference>
<dbReference type="InterPro" id="IPR004358">
    <property type="entry name" value="Sig_transdc_His_kin-like_C"/>
</dbReference>
<dbReference type="InterPro" id="IPR001789">
    <property type="entry name" value="Sig_transdc_resp-reg_receiver"/>
</dbReference>
<dbReference type="NCBIfam" id="TIGR00229">
    <property type="entry name" value="sensory_box"/>
    <property type="match status" value="2"/>
</dbReference>
<dbReference type="PANTHER" id="PTHR43547:SF2">
    <property type="entry name" value="HYBRID SIGNAL TRANSDUCTION HISTIDINE KINASE C"/>
    <property type="match status" value="1"/>
</dbReference>
<dbReference type="PANTHER" id="PTHR43547">
    <property type="entry name" value="TWO-COMPONENT HISTIDINE KINASE"/>
    <property type="match status" value="1"/>
</dbReference>
<dbReference type="Pfam" id="PF02518">
    <property type="entry name" value="HATPase_c"/>
    <property type="match status" value="2"/>
</dbReference>
<dbReference type="Pfam" id="PF00512">
    <property type="entry name" value="HisKA"/>
    <property type="match status" value="2"/>
</dbReference>
<dbReference type="Pfam" id="PF08448">
    <property type="entry name" value="PAS_4"/>
    <property type="match status" value="1"/>
</dbReference>
<dbReference type="Pfam" id="PF13426">
    <property type="entry name" value="PAS_9"/>
    <property type="match status" value="1"/>
</dbReference>
<dbReference type="Pfam" id="PF00072">
    <property type="entry name" value="Response_reg"/>
    <property type="match status" value="1"/>
</dbReference>
<dbReference type="PRINTS" id="PR00344">
    <property type="entry name" value="BCTRLSENSOR"/>
</dbReference>
<dbReference type="SMART" id="SM00387">
    <property type="entry name" value="HATPase_c"/>
    <property type="match status" value="2"/>
</dbReference>
<dbReference type="SMART" id="SM00388">
    <property type="entry name" value="HisKA"/>
    <property type="match status" value="2"/>
</dbReference>
<dbReference type="SMART" id="SM00086">
    <property type="entry name" value="PAC"/>
    <property type="match status" value="2"/>
</dbReference>
<dbReference type="SMART" id="SM00091">
    <property type="entry name" value="PAS"/>
    <property type="match status" value="2"/>
</dbReference>
<dbReference type="SMART" id="SM00448">
    <property type="entry name" value="REC"/>
    <property type="match status" value="1"/>
</dbReference>
<dbReference type="SUPFAM" id="SSF55874">
    <property type="entry name" value="ATPase domain of HSP90 chaperone/DNA topoisomerase II/histidine kinase"/>
    <property type="match status" value="2"/>
</dbReference>
<dbReference type="SUPFAM" id="SSF52172">
    <property type="entry name" value="CheY-like"/>
    <property type="match status" value="1"/>
</dbReference>
<dbReference type="SUPFAM" id="SSF47384">
    <property type="entry name" value="Homodimeric domain of signal transducing histidine kinase"/>
    <property type="match status" value="2"/>
</dbReference>
<dbReference type="SUPFAM" id="SSF55785">
    <property type="entry name" value="PYP-like sensor domain (PAS domain)"/>
    <property type="match status" value="2"/>
</dbReference>
<dbReference type="PROSITE" id="PS50109">
    <property type="entry name" value="HIS_KIN"/>
    <property type="match status" value="2"/>
</dbReference>
<dbReference type="PROSITE" id="PS50113">
    <property type="entry name" value="PAC"/>
    <property type="match status" value="2"/>
</dbReference>
<dbReference type="PROSITE" id="PS50112">
    <property type="entry name" value="PAS"/>
    <property type="match status" value="1"/>
</dbReference>
<dbReference type="PROSITE" id="PS50110">
    <property type="entry name" value="RESPONSE_REGULATORY"/>
    <property type="match status" value="1"/>
</dbReference>
<name>TODS_PSEP1</name>
<protein>
    <recommendedName>
        <fullName>Sensor histidine kinase TodS</fullName>
        <ecNumber>2.7.13.3</ecNumber>
    </recommendedName>
</protein>
<keyword id="KW-0002">3D-structure</keyword>
<keyword id="KW-0067">ATP-binding</keyword>
<keyword id="KW-0963">Cytoplasm</keyword>
<keyword id="KW-0418">Kinase</keyword>
<keyword id="KW-0547">Nucleotide-binding</keyword>
<keyword id="KW-0597">Phosphoprotein</keyword>
<keyword id="KW-0677">Repeat</keyword>
<keyword id="KW-0808">Transferase</keyword>
<keyword id="KW-0902">Two-component regulatory system</keyword>
<organism>
    <name type="scientific">Pseudomonas putida (strain ATCC 700007 / DSM 6899 / JCM 31910 / BCRC 17059 / LMG 24140 / F1)</name>
    <dbReference type="NCBI Taxonomy" id="351746"/>
    <lineage>
        <taxon>Bacteria</taxon>
        <taxon>Pseudomonadati</taxon>
        <taxon>Pseudomonadota</taxon>
        <taxon>Gammaproteobacteria</taxon>
        <taxon>Pseudomonadales</taxon>
        <taxon>Pseudomonadaceae</taxon>
        <taxon>Pseudomonas</taxon>
    </lineage>
</organism>
<sequence>MSSLDRKKPQNRSKNNYYNICLKEKGSEELTCEEHARIIFDGLYEFVGLLDAHGNVLEVNQVALEGGGITLEEIRGKPFWKARWWQISKKTEATQKRLVETASSGEFVRCDVEILGKSGGREVIAVDFSLLPICNEEGSIVYLLAEGRNITDKKKAEAMLALKNQELEQSVECIRKLDNAKSDFFAKVSHELRTPLSLILGPLEAVMAAEAGRESPYWKQFEVIQRNAMTLLKQVNTLLDLAKMDARQMGLSYRRANLSQLTRTISSNFEGIAQQKSITFDTKLPVQMVAEVDCEKYERIILNLLSNAFKFTPDGGLIRCCLSLSRPNYALVTVSDSGPGIPPALRKEIFERFHQLSQEGQQATRGTGLGLSIVKEFVELHRGTISVSDAPGGGALFQVKLPLNAPEGAYVASNTAPRRDNPQVVDTDEYLLLAPNAENEAEVLPFQSDQPRVLIVEDNPDMRGFIKDCLSSDYQVYVAPDGAKALELMSNMPPDLLITDLIMPVMSGDMLVHQVRKKNELSHIPIMVLSAKSDAELRVKLLSESVQDFLLKPFSAHELRARVSNLVSMKVAGDALRKELSDQGDDIAILTHRLIKSRHRLQQSNIALSASEARWKAVYENSAAGIVLTDPENRILNANPAFQRITGYGEKDLEGLSMEQLTPSDESPQIKQRLANLLQGGGAEYSVERSYLCKNGSTIWANASVSLMPQRVGESPVILQIIDDITEKKQAQENLNQLQQQLVYVSRSATMGEFAAYIAHEINQPLSAIMTNANAGTRWLGNEPSNIPEAKEALARIIRDSDRAAEIIRMVRSFLKRQETVLKPIDLKALVTDTSLILKAPSQNNSVNLDVVADDELPEIWGDGVQIQQLIINLAMNAIEAISQADCETRQLTLSFSGNDTGDALVISVKDTGPGISERQMAQLFNAFYTTKKEGLGMGLAICLTITEVHNGKIWVECPPAGGACFLVSIPARQGSGT</sequence>
<comment type="function">
    <text evidence="8">Member of the two-component regulatory system TodS/TodT involved in the regulation of toluene degradation. Phosphorylates TodT via a four-step phosphorelay in response to toluene (Probable).</text>
</comment>
<comment type="catalytic activity">
    <reaction>
        <text>ATP + protein L-histidine = ADP + protein N-phospho-L-histidine.</text>
        <dbReference type="EC" id="2.7.13.3"/>
    </reaction>
</comment>
<comment type="subunit">
    <text evidence="6">Homodimer. Binds as a dimer to a pseudopalindromic sequence.</text>
</comment>
<comment type="subcellular location">
    <subcellularLocation>
        <location evidence="6">Cytoplasm</location>
    </subcellularLocation>
</comment>
<comment type="domain">
    <text evidence="6">Contains a basic region leucine zipper dimerization motif at the N-terminus.</text>
</comment>
<comment type="PTM">
    <text evidence="1">Autophosphorylated. Activation requires a sequential transfer of a phosphate group from a His in the primary transmitter domain, to an Asp in the receiver domain and to a His in the secondary transmitter domain (By similarity).</text>
</comment>
<comment type="disruption phenotype">
    <text evidence="6">Mutants are unable to use toluene as the sole carbon source, are incapable of converting indole to indigo and do not have catechol dioxygenase activity.</text>
</comment>
<accession>A5W4E3</accession>
<accession>O07831</accession>